<dbReference type="EMBL" id="M15105">
    <property type="protein sequence ID" value="AAA26166.1"/>
    <property type="molecule type" value="Genomic_DNA"/>
</dbReference>
<dbReference type="EMBL" id="AF195122">
    <property type="protein sequence ID" value="AAF24302.1"/>
    <property type="molecule type" value="Genomic_DNA"/>
</dbReference>
<dbReference type="EMBL" id="CP000143">
    <property type="protein sequence ID" value="ABA79431.1"/>
    <property type="molecule type" value="Genomic_DNA"/>
</dbReference>
<dbReference type="PIR" id="B27760">
    <property type="entry name" value="LBRFAS"/>
</dbReference>
<dbReference type="RefSeq" id="WP_002720423.1">
    <property type="nucleotide sequence ID" value="NZ_CP030271.1"/>
</dbReference>
<dbReference type="RefSeq" id="YP_353332.1">
    <property type="nucleotide sequence ID" value="NC_007493.2"/>
</dbReference>
<dbReference type="PDB" id="4V9G">
    <property type="method" value="X-ray"/>
    <property type="resolution" value="7.78 A"/>
    <property type="chains" value="A4/A6/A8/A9/AE/AG/AI/AK/AO/AQ/AS/AU/AW/AY/B4/B6/B8/B9/BE/BG/BI/BK/BO/BQ/BS/BU/BW/BY=1-49"/>
</dbReference>
<dbReference type="PDB" id="7F0L">
    <property type="method" value="EM"/>
    <property type="resolution" value="2.94 A"/>
    <property type="chains" value="2/4/6/8/B/E/G/J/N/P/R/T/W/Z=1-49"/>
</dbReference>
<dbReference type="PDB" id="7PIL">
    <property type="method" value="EM"/>
    <property type="resolution" value="2.50 A"/>
    <property type="chains" value="BA/BB/BC/BD/BE/BF/BG/BH/BI/BJ/BK/BL/BM/BN=7-49"/>
</dbReference>
<dbReference type="PDB" id="7VA9">
    <property type="method" value="EM"/>
    <property type="resolution" value="3.08 A"/>
    <property type="chains" value="0/2/4/8/B/E/G/J/N/P/R/T/V/X/Z/aa/ab/b/e/g/j/n/p/r/t/v/x/z=1-49"/>
</dbReference>
<dbReference type="PDB" id="7VB9">
    <property type="method" value="EM"/>
    <property type="resolution" value="3.45 A"/>
    <property type="chains" value="0/4/8/B/E/G/J/N/aa/ab/b/e/g/j/n/p/r/t/v/x/z=1-49"/>
</dbReference>
<dbReference type="PDB" id="7VNM">
    <property type="method" value="EM"/>
    <property type="resolution" value="2.86 A"/>
    <property type="chains" value="0/2/8/B/C/E/G/J/N/P/R/T/V=1-49"/>
</dbReference>
<dbReference type="PDB" id="7VNY">
    <property type="method" value="EM"/>
    <property type="resolution" value="2.79 A"/>
    <property type="chains" value="0/2/8/B/C/E/G/J/N/P/R/T/V/Z=1-49"/>
</dbReference>
<dbReference type="PDB" id="7VOR">
    <property type="method" value="EM"/>
    <property type="resolution" value="2.74 A"/>
    <property type="chains" value="0/2/4/8/B/C/E/G/J/N/P/R/T/V/Z/b/b0/b8/c/e/g/j/n/p/r/t/v/z=1-49"/>
</dbReference>
<dbReference type="PDB" id="7VOT">
    <property type="method" value="EM"/>
    <property type="resolution" value="2.90 A"/>
    <property type="chains" value="0/2/4/8/B/C/E/G/J/N/P/R/T/V/Z/b/b0/b8/c/e/g/j/n/p/r/t/v/z=1-49"/>
</dbReference>
<dbReference type="PDB" id="7VOY">
    <property type="method" value="EM"/>
    <property type="resolution" value="4.20 A"/>
    <property type="chains" value="0/2/3/5/8/B/E/G/J/N/P/R/T/V/X/Z/t=1-49"/>
</dbReference>
<dbReference type="PDBsum" id="4V9G"/>
<dbReference type="PDBsum" id="7F0L"/>
<dbReference type="PDBsum" id="7PIL"/>
<dbReference type="PDBsum" id="7VA9"/>
<dbReference type="PDBsum" id="7VB9"/>
<dbReference type="PDBsum" id="7VNM"/>
<dbReference type="PDBsum" id="7VNY"/>
<dbReference type="PDBsum" id="7VOR"/>
<dbReference type="PDBsum" id="7VOT"/>
<dbReference type="PDBsum" id="7VOY"/>
<dbReference type="BMRB" id="Q3J1A3"/>
<dbReference type="EMDB" id="EMD-13441"/>
<dbReference type="EMDB" id="EMD-31835"/>
<dbReference type="EMDB" id="EMD-31875"/>
<dbReference type="EMDB" id="EMD-32042"/>
<dbReference type="EMDB" id="EMD-32047"/>
<dbReference type="EMDB" id="EMD-32058"/>
<dbReference type="EMDB" id="EMD-32059"/>
<dbReference type="EMDB" id="EMD-32062"/>
<dbReference type="SMR" id="Q3J1A3"/>
<dbReference type="STRING" id="272943.RSP_6108"/>
<dbReference type="EnsemblBacteria" id="ABA79431">
    <property type="protein sequence ID" value="ABA79431"/>
    <property type="gene ID" value="RSP_6108"/>
</dbReference>
<dbReference type="GeneID" id="67446992"/>
<dbReference type="KEGG" id="rsp:RSP_6108"/>
<dbReference type="PATRIC" id="fig|272943.9.peg.2202"/>
<dbReference type="eggNOG" id="ENOG50312BH">
    <property type="taxonomic scope" value="Bacteria"/>
</dbReference>
<dbReference type="OrthoDB" id="7391998at2"/>
<dbReference type="PhylomeDB" id="Q3J1A3"/>
<dbReference type="Proteomes" id="UP000002703">
    <property type="component" value="Chromosome 1"/>
</dbReference>
<dbReference type="GO" id="GO:0005886">
    <property type="term" value="C:plasma membrane"/>
    <property type="evidence" value="ECO:0007669"/>
    <property type="project" value="UniProtKB-SubCell"/>
</dbReference>
<dbReference type="GO" id="GO:0030077">
    <property type="term" value="C:plasma membrane light-harvesting complex"/>
    <property type="evidence" value="ECO:0007669"/>
    <property type="project" value="InterPro"/>
</dbReference>
<dbReference type="GO" id="GO:0042314">
    <property type="term" value="F:bacteriochlorophyll binding"/>
    <property type="evidence" value="ECO:0007669"/>
    <property type="project" value="UniProtKB-KW"/>
</dbReference>
<dbReference type="GO" id="GO:0045156">
    <property type="term" value="F:electron transporter, transferring electrons within the cyclic electron transport pathway of photosynthesis activity"/>
    <property type="evidence" value="ECO:0007669"/>
    <property type="project" value="InterPro"/>
</dbReference>
<dbReference type="GO" id="GO:0046872">
    <property type="term" value="F:metal ion binding"/>
    <property type="evidence" value="ECO:0007669"/>
    <property type="project" value="UniProtKB-KW"/>
</dbReference>
<dbReference type="GO" id="GO:0019684">
    <property type="term" value="P:photosynthesis, light reaction"/>
    <property type="evidence" value="ECO:0007669"/>
    <property type="project" value="InterPro"/>
</dbReference>
<dbReference type="Gene3D" id="1.20.5.250">
    <property type="match status" value="1"/>
</dbReference>
<dbReference type="InterPro" id="IPR000066">
    <property type="entry name" value="Antenna_a/b"/>
</dbReference>
<dbReference type="InterPro" id="IPR023623">
    <property type="entry name" value="Antenna_beta_CS"/>
</dbReference>
<dbReference type="InterPro" id="IPR023624">
    <property type="entry name" value="Antenna_beta_dom_sf"/>
</dbReference>
<dbReference type="InterPro" id="IPR002362">
    <property type="entry name" value="LHB-1/5"/>
</dbReference>
<dbReference type="InterPro" id="IPR035889">
    <property type="entry name" value="Light-harvesting_complex"/>
</dbReference>
<dbReference type="NCBIfam" id="NF040862">
    <property type="entry name" value="pufB_517_ASD"/>
    <property type="match status" value="1"/>
</dbReference>
<dbReference type="Pfam" id="PF00556">
    <property type="entry name" value="LHC"/>
    <property type="match status" value="1"/>
</dbReference>
<dbReference type="PIRSF" id="PIRSF002900">
    <property type="entry name" value="Antenna_beta"/>
    <property type="match status" value="1"/>
</dbReference>
<dbReference type="PRINTS" id="PR00674">
    <property type="entry name" value="LIGHTHARVSTB"/>
</dbReference>
<dbReference type="SUPFAM" id="SSF56918">
    <property type="entry name" value="Light-harvesting complex subunits"/>
    <property type="match status" value="1"/>
</dbReference>
<dbReference type="PROSITE" id="PS00969">
    <property type="entry name" value="ANTENNA_COMP_BETA"/>
    <property type="match status" value="1"/>
</dbReference>
<sequence length="49" mass="5588">MADKSDLGYTGLTDEQAQELHSVYMSGLWLFSAVAIVAHLAVYIWRPWF</sequence>
<evidence type="ECO:0000250" key="1"/>
<evidence type="ECO:0000305" key="2"/>
<evidence type="ECO:0007829" key="3">
    <source>
        <dbReference type="PDB" id="7VNM"/>
    </source>
</evidence>
<evidence type="ECO:0007829" key="4">
    <source>
        <dbReference type="PDB" id="7VNY"/>
    </source>
</evidence>
<feature type="initiator methionine" description="Removed" evidence="1">
    <location>
        <position position="1"/>
    </location>
</feature>
<feature type="chain" id="PRO_0000099834" description="Light-harvesting protein B-875 beta chain">
    <location>
        <begin position="2"/>
        <end position="49"/>
    </location>
</feature>
<feature type="topological domain" description="Cytoplasmic" evidence="1">
    <location>
        <begin position="2"/>
        <end position="27"/>
    </location>
</feature>
<feature type="transmembrane region" description="Helical; Signal-anchor for type II membrane protein" evidence="1">
    <location>
        <begin position="28"/>
        <end position="45"/>
    </location>
</feature>
<feature type="topological domain" description="Periplasmic" evidence="1">
    <location>
        <begin position="46"/>
        <end position="49"/>
    </location>
</feature>
<feature type="binding site" description="axial binding residue" evidence="1">
    <location>
        <position position="21"/>
    </location>
    <ligand>
        <name>a bacteriochlorophyll</name>
        <dbReference type="ChEBI" id="CHEBI:38201"/>
    </ligand>
    <ligandPart>
        <name>Mg</name>
        <dbReference type="ChEBI" id="CHEBI:25107"/>
    </ligandPart>
</feature>
<feature type="binding site" description="axial binding residue" evidence="1">
    <location>
        <position position="39"/>
    </location>
    <ligand>
        <name>a bacteriochlorophyll</name>
        <dbReference type="ChEBI" id="CHEBI:38201"/>
    </ligand>
    <ligandPart>
        <name>Mg</name>
        <dbReference type="ChEBI" id="CHEBI:25107"/>
    </ligandPart>
</feature>
<feature type="strand" evidence="3">
    <location>
        <begin position="9"/>
        <end position="11"/>
    </location>
</feature>
<feature type="helix" evidence="4">
    <location>
        <begin position="14"/>
        <end position="45"/>
    </location>
</feature>
<reference key="1">
    <citation type="journal article" date="1987" name="J. Bacteriol.">
        <title>DNA sequence and in vitro expression of the B875 light-harvesting polypeptides of Rhodobacter sphaeroides.</title>
        <authorList>
            <person name="Kiley P.J."/>
            <person name="Donohue T.J."/>
            <person name="Havelka W.A."/>
            <person name="Kaplan S."/>
        </authorList>
    </citation>
    <scope>NUCLEOTIDE SEQUENCE [GENOMIC DNA]</scope>
</reference>
<reference key="2">
    <citation type="journal article" date="2000" name="Nucleic Acids Res.">
        <title>DNA sequence analysis of the photosynthesis region of Rhodobacter sphaeroides 2.4.1.</title>
        <authorList>
            <person name="Choudhary M."/>
            <person name="Kaplan S."/>
        </authorList>
    </citation>
    <scope>NUCLEOTIDE SEQUENCE [GENOMIC DNA]</scope>
</reference>
<reference key="3">
    <citation type="submission" date="2005-09" db="EMBL/GenBank/DDBJ databases">
        <title>Complete sequence of chromosome 1 of Rhodobacter sphaeroides 2.4.1.</title>
        <authorList>
            <person name="Copeland A."/>
            <person name="Lucas S."/>
            <person name="Lapidus A."/>
            <person name="Barry K."/>
            <person name="Detter J.C."/>
            <person name="Glavina T."/>
            <person name="Hammon N."/>
            <person name="Israni S."/>
            <person name="Pitluck S."/>
            <person name="Richardson P."/>
            <person name="Mackenzie C."/>
            <person name="Choudhary M."/>
            <person name="Larimer F."/>
            <person name="Hauser L.J."/>
            <person name="Land M."/>
            <person name="Donohue T.J."/>
            <person name="Kaplan S."/>
        </authorList>
    </citation>
    <scope>NUCLEOTIDE SEQUENCE [LARGE SCALE GENOMIC DNA]</scope>
    <source>
        <strain>ATCC 17023 / DSM 158 / JCM 6121 / CCUG 31486 / LMG 2827 / NBRC 12203 / NCIMB 8253 / ATH 2.4.1.</strain>
    </source>
</reference>
<keyword id="KW-0002">3D-structure</keyword>
<keyword id="KW-0042">Antenna complex</keyword>
<keyword id="KW-0076">Bacteriochlorophyll</keyword>
<keyword id="KW-0997">Cell inner membrane</keyword>
<keyword id="KW-1003">Cell membrane</keyword>
<keyword id="KW-0148">Chlorophyll</keyword>
<keyword id="KW-0157">Chromophore</keyword>
<keyword id="KW-0437">Light-harvesting polypeptide</keyword>
<keyword id="KW-0460">Magnesium</keyword>
<keyword id="KW-0472">Membrane</keyword>
<keyword id="KW-0479">Metal-binding</keyword>
<keyword id="KW-1185">Reference proteome</keyword>
<keyword id="KW-0735">Signal-anchor</keyword>
<keyword id="KW-0812">Transmembrane</keyword>
<keyword id="KW-1133">Transmembrane helix</keyword>
<comment type="function">
    <text>Antenna complexes are light-harvesting systems, which transfer the excitation energy to the reaction centers.</text>
</comment>
<comment type="subunit">
    <text>The core complex is formed by different alpha and beta chains, binding bacteriochlorophyll molecules, and arranged most probably in tetrameric structures disposed around the reaction center. The non-pigmented gamma chains may constitute additional components.</text>
</comment>
<comment type="subcellular location">
    <subcellularLocation>
        <location>Cell inner membrane</location>
        <topology>Single-pass type II membrane protein</topology>
    </subcellularLocation>
</comment>
<comment type="similarity">
    <text evidence="2">Belongs to the antenna complex beta subunit family.</text>
</comment>
<proteinExistence type="evidence at protein level"/>
<name>LHB1_CERS4</name>
<protein>
    <recommendedName>
        <fullName>Light-harvesting protein B-875 beta chain</fullName>
    </recommendedName>
    <alternativeName>
        <fullName>Antenna pigment protein beta chain</fullName>
    </alternativeName>
    <alternativeName>
        <fullName>LH-3A</fullName>
    </alternativeName>
</protein>
<gene>
    <name type="primary">pufB</name>
    <name type="ordered locus">RHOS4_18630</name>
    <name type="ORF">RSP_6108</name>
</gene>
<organism>
    <name type="scientific">Cereibacter sphaeroides (strain ATCC 17023 / DSM 158 / JCM 6121 / CCUG 31486 / LMG 2827 / NBRC 12203 / NCIMB 8253 / ATH 2.4.1.)</name>
    <name type="common">Rhodobacter sphaeroides</name>
    <dbReference type="NCBI Taxonomy" id="272943"/>
    <lineage>
        <taxon>Bacteria</taxon>
        <taxon>Pseudomonadati</taxon>
        <taxon>Pseudomonadota</taxon>
        <taxon>Alphaproteobacteria</taxon>
        <taxon>Rhodobacterales</taxon>
        <taxon>Paracoccaceae</taxon>
        <taxon>Cereibacter</taxon>
    </lineage>
</organism>
<accession>Q3J1A3</accession>
<accession>P02951</accession>